<evidence type="ECO:0000255" key="1">
    <source>
        <dbReference type="HAMAP-Rule" id="MF_00652"/>
    </source>
</evidence>
<proteinExistence type="inferred from homology"/>
<sequence length="242" mass="27454">MKILIPTAKEMNTDLPSIEATPLKPESQAVLDALALYSASQLESFYKVSAEKATEEFQNIQALKRQTAQHYPALKLFDGLMYRNIKRDKLTEAEQDYLENHVFITSALYGVVPALSPMAPHRLDFLMKLKVAGKTLKSHWKAVYDEALKKEEVIFSLLSSEFETVFSKEIRAKMVTFKFMEDRGGQLKIHSTISKKARGAFLTALIENQVQTVGEARRLNFAGFVYREDLSQPQGLVFVKEV</sequence>
<gene>
    <name type="ordered locus">SPCG_1533</name>
</gene>
<accession>B2IR66</accession>
<reference key="1">
    <citation type="journal article" date="2009" name="BMC Genomics">
        <title>Genome evolution driven by host adaptations results in a more virulent and antimicrobial-resistant Streptococcus pneumoniae serotype 14.</title>
        <authorList>
            <person name="Ding F."/>
            <person name="Tang P."/>
            <person name="Hsu M.-H."/>
            <person name="Cui P."/>
            <person name="Hu S."/>
            <person name="Yu J."/>
            <person name="Chiu C.-H."/>
        </authorList>
    </citation>
    <scope>NUCLEOTIDE SEQUENCE [LARGE SCALE GENOMIC DNA]</scope>
    <source>
        <strain>CGSP14</strain>
    </source>
</reference>
<feature type="chain" id="PRO_1000131150" description="UPF0246 protein SPCG_1533">
    <location>
        <begin position="1"/>
        <end position="242"/>
    </location>
</feature>
<comment type="similarity">
    <text evidence="1">Belongs to the UPF0246 family.</text>
</comment>
<dbReference type="EMBL" id="CP001033">
    <property type="protein sequence ID" value="ACB90785.1"/>
    <property type="molecule type" value="Genomic_DNA"/>
</dbReference>
<dbReference type="SMR" id="B2IR66"/>
<dbReference type="KEGG" id="spw:SPCG_1533"/>
<dbReference type="HOGENOM" id="CLU_061989_2_1_9"/>
<dbReference type="GO" id="GO:0005829">
    <property type="term" value="C:cytosol"/>
    <property type="evidence" value="ECO:0007669"/>
    <property type="project" value="TreeGrafter"/>
</dbReference>
<dbReference type="GO" id="GO:0033194">
    <property type="term" value="P:response to hydroperoxide"/>
    <property type="evidence" value="ECO:0007669"/>
    <property type="project" value="TreeGrafter"/>
</dbReference>
<dbReference type="HAMAP" id="MF_00652">
    <property type="entry name" value="UPF0246"/>
    <property type="match status" value="1"/>
</dbReference>
<dbReference type="InterPro" id="IPR005583">
    <property type="entry name" value="YaaA"/>
</dbReference>
<dbReference type="NCBIfam" id="NF002543">
    <property type="entry name" value="PRK02101.1-4"/>
    <property type="match status" value="1"/>
</dbReference>
<dbReference type="PANTHER" id="PTHR30283:SF4">
    <property type="entry name" value="PEROXIDE STRESS RESISTANCE PROTEIN YAAA"/>
    <property type="match status" value="1"/>
</dbReference>
<dbReference type="PANTHER" id="PTHR30283">
    <property type="entry name" value="PEROXIDE STRESS RESPONSE PROTEIN YAAA"/>
    <property type="match status" value="1"/>
</dbReference>
<dbReference type="Pfam" id="PF03883">
    <property type="entry name" value="H2O2_YaaD"/>
    <property type="match status" value="1"/>
</dbReference>
<protein>
    <recommendedName>
        <fullName evidence="1">UPF0246 protein SPCG_1533</fullName>
    </recommendedName>
</protein>
<organism>
    <name type="scientific">Streptococcus pneumoniae (strain CGSP14)</name>
    <dbReference type="NCBI Taxonomy" id="516950"/>
    <lineage>
        <taxon>Bacteria</taxon>
        <taxon>Bacillati</taxon>
        <taxon>Bacillota</taxon>
        <taxon>Bacilli</taxon>
        <taxon>Lactobacillales</taxon>
        <taxon>Streptococcaceae</taxon>
        <taxon>Streptococcus</taxon>
    </lineage>
</organism>
<name>Y1533_STRPS</name>